<feature type="chain" id="PRO_0000231324" description="S-adenosylmethionine:tRNA ribosyltransferase-isomerase">
    <location>
        <begin position="1"/>
        <end position="360"/>
    </location>
</feature>
<dbReference type="EC" id="2.4.99.17" evidence="1"/>
<dbReference type="EMBL" id="BX571965">
    <property type="protein sequence ID" value="CAH36878.1"/>
    <property type="molecule type" value="Genomic_DNA"/>
</dbReference>
<dbReference type="RefSeq" id="WP_004538740.1">
    <property type="nucleotide sequence ID" value="NZ_CP009538.1"/>
</dbReference>
<dbReference type="RefSeq" id="YP_109462.1">
    <property type="nucleotide sequence ID" value="NC_006350.1"/>
</dbReference>
<dbReference type="SMR" id="Q63R06"/>
<dbReference type="STRING" id="272560.BPSL2868"/>
<dbReference type="KEGG" id="bps:BPSL2868"/>
<dbReference type="PATRIC" id="fig|272560.51.peg.2429"/>
<dbReference type="eggNOG" id="COG0809">
    <property type="taxonomic scope" value="Bacteria"/>
</dbReference>
<dbReference type="UniPathway" id="UPA00392"/>
<dbReference type="Proteomes" id="UP000000605">
    <property type="component" value="Chromosome 1"/>
</dbReference>
<dbReference type="GO" id="GO:0005737">
    <property type="term" value="C:cytoplasm"/>
    <property type="evidence" value="ECO:0007669"/>
    <property type="project" value="UniProtKB-SubCell"/>
</dbReference>
<dbReference type="GO" id="GO:0051075">
    <property type="term" value="F:S-adenosylmethionine:tRNA ribosyltransferase-isomerase activity"/>
    <property type="evidence" value="ECO:0007669"/>
    <property type="project" value="UniProtKB-EC"/>
</dbReference>
<dbReference type="GO" id="GO:0008616">
    <property type="term" value="P:queuosine biosynthetic process"/>
    <property type="evidence" value="ECO:0007669"/>
    <property type="project" value="UniProtKB-UniRule"/>
</dbReference>
<dbReference type="GO" id="GO:0002099">
    <property type="term" value="P:tRNA wobble guanine modification"/>
    <property type="evidence" value="ECO:0007669"/>
    <property type="project" value="TreeGrafter"/>
</dbReference>
<dbReference type="FunFam" id="3.40.1780.10:FF:000001">
    <property type="entry name" value="S-adenosylmethionine:tRNA ribosyltransferase-isomerase"/>
    <property type="match status" value="1"/>
</dbReference>
<dbReference type="Gene3D" id="2.40.10.240">
    <property type="entry name" value="QueA-like"/>
    <property type="match status" value="1"/>
</dbReference>
<dbReference type="Gene3D" id="3.40.1780.10">
    <property type="entry name" value="QueA-like"/>
    <property type="match status" value="1"/>
</dbReference>
<dbReference type="HAMAP" id="MF_00113">
    <property type="entry name" value="QueA"/>
    <property type="match status" value="1"/>
</dbReference>
<dbReference type="InterPro" id="IPR003699">
    <property type="entry name" value="QueA"/>
</dbReference>
<dbReference type="InterPro" id="IPR042118">
    <property type="entry name" value="QueA_dom1"/>
</dbReference>
<dbReference type="InterPro" id="IPR042119">
    <property type="entry name" value="QueA_dom2"/>
</dbReference>
<dbReference type="InterPro" id="IPR036100">
    <property type="entry name" value="QueA_sf"/>
</dbReference>
<dbReference type="NCBIfam" id="NF001140">
    <property type="entry name" value="PRK00147.1"/>
    <property type="match status" value="1"/>
</dbReference>
<dbReference type="NCBIfam" id="TIGR00113">
    <property type="entry name" value="queA"/>
    <property type="match status" value="1"/>
</dbReference>
<dbReference type="PANTHER" id="PTHR30307">
    <property type="entry name" value="S-ADENOSYLMETHIONINE:TRNA RIBOSYLTRANSFERASE-ISOMERASE"/>
    <property type="match status" value="1"/>
</dbReference>
<dbReference type="PANTHER" id="PTHR30307:SF0">
    <property type="entry name" value="S-ADENOSYLMETHIONINE:TRNA RIBOSYLTRANSFERASE-ISOMERASE"/>
    <property type="match status" value="1"/>
</dbReference>
<dbReference type="Pfam" id="PF02547">
    <property type="entry name" value="Queuosine_synth"/>
    <property type="match status" value="1"/>
</dbReference>
<dbReference type="SUPFAM" id="SSF111337">
    <property type="entry name" value="QueA-like"/>
    <property type="match status" value="1"/>
</dbReference>
<sequence>MLTLSDFDFDLPPELIAQTALPERSASRLLEVDNTNPSAPPRLVDRRFAELPACVAPGDLLVFNDTKVLKARFFGRKASGGKIEVLIERVTGERTALAQIRASKSPPPGTTLTLADAFDVTVGERVEPFFTLHFPDDCLVLIERHGRLPLPPYIEHAPDAADETRYQTVFAANPGAVAAPTAGLHFDDAVLTALEARGVERATLTLHVGAGTFQPVRVENLAEHRMHSESYELTDALVEKIAATRARGGRVIAVGTTSMRALEAAARDAQAAGRPLAATRAETDIFITPGYRFRVVDRLVTNFHLPKSTLLMLVSAFAGIETIRAAYRHAIDARYRFFSYGDAMLLTRRDDAAEATHGGA</sequence>
<evidence type="ECO:0000255" key="1">
    <source>
        <dbReference type="HAMAP-Rule" id="MF_00113"/>
    </source>
</evidence>
<organism>
    <name type="scientific">Burkholderia pseudomallei (strain K96243)</name>
    <dbReference type="NCBI Taxonomy" id="272560"/>
    <lineage>
        <taxon>Bacteria</taxon>
        <taxon>Pseudomonadati</taxon>
        <taxon>Pseudomonadota</taxon>
        <taxon>Betaproteobacteria</taxon>
        <taxon>Burkholderiales</taxon>
        <taxon>Burkholderiaceae</taxon>
        <taxon>Burkholderia</taxon>
        <taxon>pseudomallei group</taxon>
    </lineage>
</organism>
<comment type="function">
    <text evidence="1">Transfers and isomerizes the ribose moiety from AdoMet to the 7-aminomethyl group of 7-deazaguanine (preQ1-tRNA) to give epoxyqueuosine (oQ-tRNA).</text>
</comment>
<comment type="catalytic activity">
    <reaction evidence="1">
        <text>7-aminomethyl-7-carbaguanosine(34) in tRNA + S-adenosyl-L-methionine = epoxyqueuosine(34) in tRNA + adenine + L-methionine + 2 H(+)</text>
        <dbReference type="Rhea" id="RHEA:32155"/>
        <dbReference type="Rhea" id="RHEA-COMP:10342"/>
        <dbReference type="Rhea" id="RHEA-COMP:18582"/>
        <dbReference type="ChEBI" id="CHEBI:15378"/>
        <dbReference type="ChEBI" id="CHEBI:16708"/>
        <dbReference type="ChEBI" id="CHEBI:57844"/>
        <dbReference type="ChEBI" id="CHEBI:59789"/>
        <dbReference type="ChEBI" id="CHEBI:82833"/>
        <dbReference type="ChEBI" id="CHEBI:194443"/>
        <dbReference type="EC" id="2.4.99.17"/>
    </reaction>
</comment>
<comment type="pathway">
    <text evidence="1">tRNA modification; tRNA-queuosine biosynthesis.</text>
</comment>
<comment type="subunit">
    <text evidence="1">Monomer.</text>
</comment>
<comment type="subcellular location">
    <subcellularLocation>
        <location evidence="1">Cytoplasm</location>
    </subcellularLocation>
</comment>
<comment type="similarity">
    <text evidence="1">Belongs to the QueA family.</text>
</comment>
<name>QUEA_BURPS</name>
<keyword id="KW-0963">Cytoplasm</keyword>
<keyword id="KW-0671">Queuosine biosynthesis</keyword>
<keyword id="KW-1185">Reference proteome</keyword>
<keyword id="KW-0949">S-adenosyl-L-methionine</keyword>
<keyword id="KW-0808">Transferase</keyword>
<accession>Q63R06</accession>
<gene>
    <name evidence="1" type="primary">queA</name>
    <name type="ordered locus">BPSL2868</name>
</gene>
<reference key="1">
    <citation type="journal article" date="2004" name="Proc. Natl. Acad. Sci. U.S.A.">
        <title>Genomic plasticity of the causative agent of melioidosis, Burkholderia pseudomallei.</title>
        <authorList>
            <person name="Holden M.T.G."/>
            <person name="Titball R.W."/>
            <person name="Peacock S.J."/>
            <person name="Cerdeno-Tarraga A.-M."/>
            <person name="Atkins T."/>
            <person name="Crossman L.C."/>
            <person name="Pitt T."/>
            <person name="Churcher C."/>
            <person name="Mungall K.L."/>
            <person name="Bentley S.D."/>
            <person name="Sebaihia M."/>
            <person name="Thomson N.R."/>
            <person name="Bason N."/>
            <person name="Beacham I.R."/>
            <person name="Brooks K."/>
            <person name="Brown K.A."/>
            <person name="Brown N.F."/>
            <person name="Challis G.L."/>
            <person name="Cherevach I."/>
            <person name="Chillingworth T."/>
            <person name="Cronin A."/>
            <person name="Crossett B."/>
            <person name="Davis P."/>
            <person name="DeShazer D."/>
            <person name="Feltwell T."/>
            <person name="Fraser A."/>
            <person name="Hance Z."/>
            <person name="Hauser H."/>
            <person name="Holroyd S."/>
            <person name="Jagels K."/>
            <person name="Keith K.E."/>
            <person name="Maddison M."/>
            <person name="Moule S."/>
            <person name="Price C."/>
            <person name="Quail M.A."/>
            <person name="Rabbinowitsch E."/>
            <person name="Rutherford K."/>
            <person name="Sanders M."/>
            <person name="Simmonds M."/>
            <person name="Songsivilai S."/>
            <person name="Stevens K."/>
            <person name="Tumapa S."/>
            <person name="Vesaratchavest M."/>
            <person name="Whitehead S."/>
            <person name="Yeats C."/>
            <person name="Barrell B.G."/>
            <person name="Oyston P.C.F."/>
            <person name="Parkhill J."/>
        </authorList>
    </citation>
    <scope>NUCLEOTIDE SEQUENCE [LARGE SCALE GENOMIC DNA]</scope>
    <source>
        <strain>K96243</strain>
    </source>
</reference>
<protein>
    <recommendedName>
        <fullName evidence="1">S-adenosylmethionine:tRNA ribosyltransferase-isomerase</fullName>
        <ecNumber evidence="1">2.4.99.17</ecNumber>
    </recommendedName>
    <alternativeName>
        <fullName evidence="1">Queuosine biosynthesis protein QueA</fullName>
    </alternativeName>
</protein>
<proteinExistence type="inferred from homology"/>